<comment type="function">
    <text evidence="1">Plays a critical role in cytoplasmic virus egress. Participates in the final step of tegumentation and envelope acquisition within the host cytoplasm by directly interacting with the capsid. Upon virion binding to target cell, a signaling cascade is triggered to disrupt the interaction with the capsid, thereby preparing capsid uncoating.</text>
</comment>
<comment type="subunit">
    <text evidence="1">Interacts with cytoplasmic envelopment protein 3 and with the capsid.</text>
</comment>
<comment type="subcellular location">
    <subcellularLocation>
        <location evidence="1">Virion tegument</location>
    </subcellularLocation>
    <subcellularLocation>
        <location evidence="1">Host cytoplasm</location>
    </subcellularLocation>
    <subcellularLocation>
        <location evidence="1">Host nucleus</location>
    </subcellularLocation>
    <text evidence="1">Localizes in the host nucleus up to 18 hours postinfection, but at later times localizes to punctate, cytoplasmic structures.</text>
</comment>
<comment type="similarity">
    <text evidence="1">Belongs to the herpesviridae cytoplasmic envelopment protein 2 family.</text>
</comment>
<accession>Q18LD3</accession>
<sequence>MSTSSEPYLEPLRLFLNKECIWRKTGKGAKHREYRCLSSSSPWSILPHQAARRVWKYEINIIIVKKRNDDYIISMAIEGLHYQQILCPKVLTQLFFILHSHGGTKFYKLTFDPFKPMNAELAVPLYDTTPLPHMTMQGLSVYDHCSVVGKPICAQVAGSITQIGTCGVWAVTTGAQTNIVCFALRYDLAVCISDPKVFPSMARCMASAVGCAQETCSYCTGHNKHVEVFDVNGDYGKNKELCFCSTPCGDWDFRDESMKPLFSKNDDMVGIRVREPPNSENTIFSKASAYFYGITRDGKEVDLSDENFILLKIDPRLSHMIIVACPILKRMCMIKS</sequence>
<feature type="chain" id="PRO_0000408163" description="Cytoplasmic envelopment protein 2">
    <location>
        <begin position="1"/>
        <end position="336"/>
    </location>
</feature>
<dbReference type="EMBL" id="AF322977">
    <property type="protein sequence ID" value="ABG36586.1"/>
    <property type="molecule type" value="Genomic_DNA"/>
</dbReference>
<dbReference type="GO" id="GO:0030430">
    <property type="term" value="C:host cell cytoplasm"/>
    <property type="evidence" value="ECO:0007669"/>
    <property type="project" value="UniProtKB-SubCell"/>
</dbReference>
<dbReference type="GO" id="GO:0042025">
    <property type="term" value="C:host cell nucleus"/>
    <property type="evidence" value="ECO:0007669"/>
    <property type="project" value="UniProtKB-SubCell"/>
</dbReference>
<dbReference type="GO" id="GO:0019033">
    <property type="term" value="C:viral tegument"/>
    <property type="evidence" value="ECO:0007669"/>
    <property type="project" value="UniProtKB-SubCell"/>
</dbReference>
<dbReference type="HAMAP" id="MF_04039">
    <property type="entry name" value="HSV_CEP2"/>
    <property type="match status" value="1"/>
</dbReference>
<dbReference type="InterPro" id="IPR004286">
    <property type="entry name" value="Herpes_UL16/UL94"/>
</dbReference>
<dbReference type="Pfam" id="PF03044">
    <property type="entry name" value="Herpes_UL16"/>
    <property type="match status" value="1"/>
</dbReference>
<proteinExistence type="inferred from homology"/>
<reference key="1">
    <citation type="journal article" date="2007" name="J. Virol.">
        <title>Identification of novel rodent herpesviruses, including the first gammaherpesvirus of Mus musculus.</title>
        <authorList>
            <person name="Ehlers B."/>
            <person name="Kuchler J."/>
            <person name="Yasmum N."/>
            <person name="Dural G."/>
            <person name="Voigt S."/>
            <person name="Schmidt-Chanasit J."/>
            <person name="Jakel T."/>
            <person name="Matuschka F.R."/>
            <person name="Richter D."/>
            <person name="Essbauer S."/>
            <person name="Hughes D.J."/>
            <person name="Summers C."/>
            <person name="Bennett M."/>
            <person name="Stewart J.P."/>
            <person name="Ulrich R.G."/>
        </authorList>
    </citation>
    <scope>NUCLEOTIDE SEQUENCE [GENOMIC DNA]</scope>
</reference>
<reference key="2">
    <citation type="journal article" date="2001" name="J. Gen. Virol.">
        <title>Genetic and ultrastructural characterization of a European isolate of the fatal endotheliotropic elephant herpesvirus.</title>
        <authorList>
            <person name="Ehlers B."/>
            <person name="Burkhardt S."/>
            <person name="Goltz M."/>
            <person name="Bergmann V."/>
            <person name="Ochs A."/>
            <person name="Weiler H."/>
            <person name="Hentschke J."/>
        </authorList>
    </citation>
    <scope>NUCLEOTIDE SEQUENCE [GENOMIC DNA]</scope>
</reference>
<name>CEP2_ELHVK</name>
<evidence type="ECO:0000255" key="1">
    <source>
        <dbReference type="HAMAP-Rule" id="MF_04039"/>
    </source>
</evidence>
<keyword id="KW-1035">Host cytoplasm</keyword>
<keyword id="KW-1048">Host nucleus</keyword>
<keyword id="KW-0426">Late protein</keyword>
<keyword id="KW-0946">Virion</keyword>
<keyword id="KW-0920">Virion tegument</keyword>
<organism>
    <name type="scientific">Elephantid herpesvirus 1 (isolate Asian elephant/Berlin/Kiba/1998)</name>
    <name type="common">EIHV-1</name>
    <name type="synonym">Elephant endotheliotropic herpesvirus</name>
    <dbReference type="NCBI Taxonomy" id="654902"/>
    <lineage>
        <taxon>Viruses</taxon>
        <taxon>Duplodnaviria</taxon>
        <taxon>Heunggongvirae</taxon>
        <taxon>Peploviricota</taxon>
        <taxon>Herviviricetes</taxon>
        <taxon>Herpesvirales</taxon>
        <taxon>Orthoherpesviridae</taxon>
        <taxon>Betaherpesvirinae</taxon>
        <taxon>Proboscivirus</taxon>
        <taxon>Proboscivirus elephantidbeta1</taxon>
        <taxon>Elephantid herpesvirus 1</taxon>
    </lineage>
</organism>
<protein>
    <recommendedName>
        <fullName evidence="1">Cytoplasmic envelopment protein 2</fullName>
    </recommendedName>
</protein>
<organismHost>
    <name type="scientific">Elephas maximus</name>
    <name type="common">Indian elephant</name>
    <dbReference type="NCBI Taxonomy" id="9783"/>
</organismHost>
<organismHost>
    <name type="scientific">Loxodonta africana</name>
    <name type="common">African elephant</name>
    <dbReference type="NCBI Taxonomy" id="9785"/>
</organismHost>
<organismHost>
    <name type="scientific">Loxodonta cyclotis</name>
    <name type="common">African forest elephant</name>
    <dbReference type="NCBI Taxonomy" id="99490"/>
</organismHost>